<name>MURC_VIBCH</name>
<protein>
    <recommendedName>
        <fullName evidence="1">UDP-N-acetylmuramate--L-alanine ligase</fullName>
        <ecNumber evidence="1">6.3.2.8</ecNumber>
    </recommendedName>
    <alternativeName>
        <fullName evidence="1">UDP-N-acetylmuramoyl-L-alanine synthetase</fullName>
    </alternativeName>
</protein>
<sequence length="486" mass="53041">MTIKHTQDLAQIRAMVPEMRRVKAIHFIGIGGAGMSGIAEVLLNEGYQISGSDLAANAVTDRLADKGATIFIGHEAHNVAHASVVVVSTAINEQNPEIQAAREKRIPIVRRAEMLAELMRFRHGIAVAGTHGKTTTTALVTQIYSEAGLDPTFVNGGLVKSAGTNARLGSSRILIAEADESDASFLHLQPMVTIVTNIEADHMDTYGGDFENLKQTFIDFLHNLPFYGQAILCIDDPVIRELIPRVSRQVITYGFSEDADVRIENYRQNGQQGQFTVVRKGKANLDITLNIPGRHNALNAAAAIAVATEDDIRDEAILRAMANTQGTGRRFDHLGEFETGNGVAMLVDDYGHHPTEVDVTIKAARNGWAEKRLVMIFQPHRYTRTRDLYDDFANVLEQVDVLIMLDVYAAGEKPIAGADGRSLCRTIRSRGKIDPIFVPDSQTLPSVLANILQDGDLVLTQGAGDVGKVARHLAALELNIGRMQQI</sequence>
<proteinExistence type="inferred from homology"/>
<dbReference type="EC" id="6.3.2.8" evidence="1"/>
<dbReference type="EMBL" id="AE003852">
    <property type="protein sequence ID" value="AAF95543.1"/>
    <property type="status" value="ALT_INIT"/>
    <property type="molecule type" value="Genomic_DNA"/>
</dbReference>
<dbReference type="PIR" id="D82081">
    <property type="entry name" value="D82081"/>
</dbReference>
<dbReference type="RefSeq" id="NP_232030.2">
    <property type="nucleotide sequence ID" value="NC_002505.1"/>
</dbReference>
<dbReference type="RefSeq" id="WP_000152804.1">
    <property type="nucleotide sequence ID" value="NZ_LT906614.1"/>
</dbReference>
<dbReference type="SMR" id="Q9KPG8"/>
<dbReference type="STRING" id="243277.VC_2400"/>
<dbReference type="DNASU" id="2613069"/>
<dbReference type="EnsemblBacteria" id="AAF95543">
    <property type="protein sequence ID" value="AAF95543"/>
    <property type="gene ID" value="VC_2400"/>
</dbReference>
<dbReference type="GeneID" id="88783211"/>
<dbReference type="KEGG" id="vch:VC_2400"/>
<dbReference type="PATRIC" id="fig|243277.26.peg.2285"/>
<dbReference type="eggNOG" id="COG0773">
    <property type="taxonomic scope" value="Bacteria"/>
</dbReference>
<dbReference type="HOGENOM" id="CLU_028104_2_2_6"/>
<dbReference type="UniPathway" id="UPA00219"/>
<dbReference type="Proteomes" id="UP000000584">
    <property type="component" value="Chromosome 1"/>
</dbReference>
<dbReference type="GO" id="GO:0005737">
    <property type="term" value="C:cytoplasm"/>
    <property type="evidence" value="ECO:0007669"/>
    <property type="project" value="UniProtKB-SubCell"/>
</dbReference>
<dbReference type="GO" id="GO:0005524">
    <property type="term" value="F:ATP binding"/>
    <property type="evidence" value="ECO:0007669"/>
    <property type="project" value="UniProtKB-UniRule"/>
</dbReference>
<dbReference type="GO" id="GO:0008763">
    <property type="term" value="F:UDP-N-acetylmuramate-L-alanine ligase activity"/>
    <property type="evidence" value="ECO:0007669"/>
    <property type="project" value="UniProtKB-UniRule"/>
</dbReference>
<dbReference type="GO" id="GO:0051301">
    <property type="term" value="P:cell division"/>
    <property type="evidence" value="ECO:0007669"/>
    <property type="project" value="UniProtKB-KW"/>
</dbReference>
<dbReference type="GO" id="GO:0071555">
    <property type="term" value="P:cell wall organization"/>
    <property type="evidence" value="ECO:0007669"/>
    <property type="project" value="UniProtKB-KW"/>
</dbReference>
<dbReference type="GO" id="GO:0009252">
    <property type="term" value="P:peptidoglycan biosynthetic process"/>
    <property type="evidence" value="ECO:0007669"/>
    <property type="project" value="UniProtKB-UniRule"/>
</dbReference>
<dbReference type="GO" id="GO:0008360">
    <property type="term" value="P:regulation of cell shape"/>
    <property type="evidence" value="ECO:0007669"/>
    <property type="project" value="UniProtKB-KW"/>
</dbReference>
<dbReference type="FunFam" id="3.40.1190.10:FF:000001">
    <property type="entry name" value="UDP-N-acetylmuramate--L-alanine ligase"/>
    <property type="match status" value="1"/>
</dbReference>
<dbReference type="FunFam" id="3.40.50.720:FF:000046">
    <property type="entry name" value="UDP-N-acetylmuramate--L-alanine ligase"/>
    <property type="match status" value="1"/>
</dbReference>
<dbReference type="FunFam" id="3.90.190.20:FF:000001">
    <property type="entry name" value="UDP-N-acetylmuramate--L-alanine ligase"/>
    <property type="match status" value="1"/>
</dbReference>
<dbReference type="Gene3D" id="3.90.190.20">
    <property type="entry name" value="Mur ligase, C-terminal domain"/>
    <property type="match status" value="1"/>
</dbReference>
<dbReference type="Gene3D" id="3.40.1190.10">
    <property type="entry name" value="Mur-like, catalytic domain"/>
    <property type="match status" value="1"/>
</dbReference>
<dbReference type="Gene3D" id="3.40.50.720">
    <property type="entry name" value="NAD(P)-binding Rossmann-like Domain"/>
    <property type="match status" value="1"/>
</dbReference>
<dbReference type="HAMAP" id="MF_00046">
    <property type="entry name" value="MurC"/>
    <property type="match status" value="1"/>
</dbReference>
<dbReference type="InterPro" id="IPR036565">
    <property type="entry name" value="Mur-like_cat_sf"/>
</dbReference>
<dbReference type="InterPro" id="IPR004101">
    <property type="entry name" value="Mur_ligase_C"/>
</dbReference>
<dbReference type="InterPro" id="IPR036615">
    <property type="entry name" value="Mur_ligase_C_dom_sf"/>
</dbReference>
<dbReference type="InterPro" id="IPR013221">
    <property type="entry name" value="Mur_ligase_cen"/>
</dbReference>
<dbReference type="InterPro" id="IPR000713">
    <property type="entry name" value="Mur_ligase_N"/>
</dbReference>
<dbReference type="InterPro" id="IPR050061">
    <property type="entry name" value="MurCDEF_pg_biosynth"/>
</dbReference>
<dbReference type="InterPro" id="IPR005758">
    <property type="entry name" value="UDP-N-AcMur_Ala_ligase_MurC"/>
</dbReference>
<dbReference type="NCBIfam" id="TIGR01082">
    <property type="entry name" value="murC"/>
    <property type="match status" value="1"/>
</dbReference>
<dbReference type="PANTHER" id="PTHR43445:SF3">
    <property type="entry name" value="UDP-N-ACETYLMURAMATE--L-ALANINE LIGASE"/>
    <property type="match status" value="1"/>
</dbReference>
<dbReference type="PANTHER" id="PTHR43445">
    <property type="entry name" value="UDP-N-ACETYLMURAMATE--L-ALANINE LIGASE-RELATED"/>
    <property type="match status" value="1"/>
</dbReference>
<dbReference type="Pfam" id="PF01225">
    <property type="entry name" value="Mur_ligase"/>
    <property type="match status" value="1"/>
</dbReference>
<dbReference type="Pfam" id="PF02875">
    <property type="entry name" value="Mur_ligase_C"/>
    <property type="match status" value="1"/>
</dbReference>
<dbReference type="Pfam" id="PF08245">
    <property type="entry name" value="Mur_ligase_M"/>
    <property type="match status" value="1"/>
</dbReference>
<dbReference type="SUPFAM" id="SSF51984">
    <property type="entry name" value="MurCD N-terminal domain"/>
    <property type="match status" value="1"/>
</dbReference>
<dbReference type="SUPFAM" id="SSF53623">
    <property type="entry name" value="MurD-like peptide ligases, catalytic domain"/>
    <property type="match status" value="1"/>
</dbReference>
<dbReference type="SUPFAM" id="SSF53244">
    <property type="entry name" value="MurD-like peptide ligases, peptide-binding domain"/>
    <property type="match status" value="1"/>
</dbReference>
<accession>Q9KPG8</accession>
<keyword id="KW-0067">ATP-binding</keyword>
<keyword id="KW-0131">Cell cycle</keyword>
<keyword id="KW-0132">Cell division</keyword>
<keyword id="KW-0133">Cell shape</keyword>
<keyword id="KW-0961">Cell wall biogenesis/degradation</keyword>
<keyword id="KW-0963">Cytoplasm</keyword>
<keyword id="KW-0436">Ligase</keyword>
<keyword id="KW-0547">Nucleotide-binding</keyword>
<keyword id="KW-0573">Peptidoglycan synthesis</keyword>
<keyword id="KW-1185">Reference proteome</keyword>
<comment type="function">
    <text evidence="1">Cell wall formation.</text>
</comment>
<comment type="catalytic activity">
    <reaction evidence="1">
        <text>UDP-N-acetyl-alpha-D-muramate + L-alanine + ATP = UDP-N-acetyl-alpha-D-muramoyl-L-alanine + ADP + phosphate + H(+)</text>
        <dbReference type="Rhea" id="RHEA:23372"/>
        <dbReference type="ChEBI" id="CHEBI:15378"/>
        <dbReference type="ChEBI" id="CHEBI:30616"/>
        <dbReference type="ChEBI" id="CHEBI:43474"/>
        <dbReference type="ChEBI" id="CHEBI:57972"/>
        <dbReference type="ChEBI" id="CHEBI:70757"/>
        <dbReference type="ChEBI" id="CHEBI:83898"/>
        <dbReference type="ChEBI" id="CHEBI:456216"/>
        <dbReference type="EC" id="6.3.2.8"/>
    </reaction>
</comment>
<comment type="pathway">
    <text evidence="1">Cell wall biogenesis; peptidoglycan biosynthesis.</text>
</comment>
<comment type="subcellular location">
    <subcellularLocation>
        <location evidence="1">Cytoplasm</location>
    </subcellularLocation>
</comment>
<comment type="similarity">
    <text evidence="1">Belongs to the MurCDEF family.</text>
</comment>
<comment type="sequence caution" evidence="2">
    <conflict type="erroneous initiation">
        <sequence resource="EMBL-CDS" id="AAF95543"/>
    </conflict>
</comment>
<feature type="chain" id="PRO_0000182180" description="UDP-N-acetylmuramate--L-alanine ligase">
    <location>
        <begin position="1"/>
        <end position="486"/>
    </location>
</feature>
<feature type="binding site" evidence="1">
    <location>
        <begin position="129"/>
        <end position="135"/>
    </location>
    <ligand>
        <name>ATP</name>
        <dbReference type="ChEBI" id="CHEBI:30616"/>
    </ligand>
</feature>
<organism>
    <name type="scientific">Vibrio cholerae serotype O1 (strain ATCC 39315 / El Tor Inaba N16961)</name>
    <dbReference type="NCBI Taxonomy" id="243277"/>
    <lineage>
        <taxon>Bacteria</taxon>
        <taxon>Pseudomonadati</taxon>
        <taxon>Pseudomonadota</taxon>
        <taxon>Gammaproteobacteria</taxon>
        <taxon>Vibrionales</taxon>
        <taxon>Vibrionaceae</taxon>
        <taxon>Vibrio</taxon>
    </lineage>
</organism>
<gene>
    <name evidence="1" type="primary">murC</name>
    <name type="ordered locus">VC_2400</name>
</gene>
<reference key="1">
    <citation type="journal article" date="2000" name="Nature">
        <title>DNA sequence of both chromosomes of the cholera pathogen Vibrio cholerae.</title>
        <authorList>
            <person name="Heidelberg J.F."/>
            <person name="Eisen J.A."/>
            <person name="Nelson W.C."/>
            <person name="Clayton R.A."/>
            <person name="Gwinn M.L."/>
            <person name="Dodson R.J."/>
            <person name="Haft D.H."/>
            <person name="Hickey E.K."/>
            <person name="Peterson J.D."/>
            <person name="Umayam L.A."/>
            <person name="Gill S.R."/>
            <person name="Nelson K.E."/>
            <person name="Read T.D."/>
            <person name="Tettelin H."/>
            <person name="Richardson D.L."/>
            <person name="Ermolaeva M.D."/>
            <person name="Vamathevan J.J."/>
            <person name="Bass S."/>
            <person name="Qin H."/>
            <person name="Dragoi I."/>
            <person name="Sellers P."/>
            <person name="McDonald L.A."/>
            <person name="Utterback T.R."/>
            <person name="Fleischmann R.D."/>
            <person name="Nierman W.C."/>
            <person name="White O."/>
            <person name="Salzberg S.L."/>
            <person name="Smith H.O."/>
            <person name="Colwell R.R."/>
            <person name="Mekalanos J.J."/>
            <person name="Venter J.C."/>
            <person name="Fraser C.M."/>
        </authorList>
    </citation>
    <scope>NUCLEOTIDE SEQUENCE [LARGE SCALE GENOMIC DNA]</scope>
    <source>
        <strain>ATCC 39315 / El Tor Inaba N16961</strain>
    </source>
</reference>
<evidence type="ECO:0000255" key="1">
    <source>
        <dbReference type="HAMAP-Rule" id="MF_00046"/>
    </source>
</evidence>
<evidence type="ECO:0000305" key="2"/>